<organism>
    <name type="scientific">Mus musculus</name>
    <name type="common">Mouse</name>
    <dbReference type="NCBI Taxonomy" id="10090"/>
    <lineage>
        <taxon>Eukaryota</taxon>
        <taxon>Metazoa</taxon>
        <taxon>Chordata</taxon>
        <taxon>Craniata</taxon>
        <taxon>Vertebrata</taxon>
        <taxon>Euteleostomi</taxon>
        <taxon>Mammalia</taxon>
        <taxon>Eutheria</taxon>
        <taxon>Euarchontoglires</taxon>
        <taxon>Glires</taxon>
        <taxon>Rodentia</taxon>
        <taxon>Myomorpha</taxon>
        <taxon>Muroidea</taxon>
        <taxon>Muridae</taxon>
        <taxon>Murinae</taxon>
        <taxon>Mus</taxon>
        <taxon>Mus</taxon>
    </lineage>
</organism>
<comment type="alternative products">
    <event type="alternative splicing"/>
    <isoform>
        <id>Q920I9-1</id>
        <name>1</name>
        <sequence type="displayed"/>
    </isoform>
    <isoform>
        <id>Q920I9-2</id>
        <name>2</name>
        <sequence type="described" ref="VSP_015275"/>
    </isoform>
</comment>
<evidence type="ECO:0000256" key="1">
    <source>
        <dbReference type="SAM" id="MobiDB-lite"/>
    </source>
</evidence>
<evidence type="ECO:0000303" key="2">
    <source>
    </source>
</evidence>
<evidence type="ECO:0000303" key="3">
    <source>
    </source>
</evidence>
<evidence type="ECO:0000303" key="4">
    <source ref="1"/>
</evidence>
<evidence type="ECO:0000305" key="5"/>
<evidence type="ECO:0007744" key="6">
    <source>
    </source>
</evidence>
<feature type="chain" id="PRO_0000051354" description="WD repeat-containing protein 7">
    <location>
        <begin position="1"/>
        <end position="1489"/>
    </location>
</feature>
<feature type="repeat" description="WD 1">
    <location>
        <begin position="17"/>
        <end position="56"/>
    </location>
</feature>
<feature type="repeat" description="WD 2">
    <location>
        <begin position="62"/>
        <end position="104"/>
    </location>
</feature>
<feature type="repeat" description="WD 3">
    <location>
        <begin position="156"/>
        <end position="199"/>
    </location>
</feature>
<feature type="repeat" description="WD 4">
    <location>
        <begin position="324"/>
        <end position="366"/>
    </location>
</feature>
<feature type="repeat" description="WD 5">
    <location>
        <begin position="404"/>
        <end position="443"/>
    </location>
</feature>
<feature type="repeat" description="WD 6">
    <location>
        <begin position="462"/>
        <end position="507"/>
    </location>
</feature>
<feature type="repeat" description="WD 7">
    <location>
        <begin position="558"/>
        <end position="597"/>
    </location>
</feature>
<feature type="repeat" description="WD 8">
    <location>
        <begin position="1350"/>
        <end position="1389"/>
    </location>
</feature>
<feature type="repeat" description="WD 9">
    <location>
        <begin position="1391"/>
        <end position="1431"/>
    </location>
</feature>
<feature type="region of interest" description="Disordered" evidence="1">
    <location>
        <begin position="754"/>
        <end position="783"/>
    </location>
</feature>
<feature type="region of interest" description="Disordered" evidence="1">
    <location>
        <begin position="911"/>
        <end position="947"/>
    </location>
</feature>
<feature type="compositionally biased region" description="Basic and acidic residues" evidence="1">
    <location>
        <begin position="767"/>
        <end position="782"/>
    </location>
</feature>
<feature type="modified residue" description="Phosphoserine" evidence="6">
    <location>
        <position position="935"/>
    </location>
</feature>
<feature type="modified residue" description="Phosphoserine" evidence="6">
    <location>
        <position position="1455"/>
    </location>
</feature>
<feature type="splice variant" id="VSP_015275" description="In isoform 2." evidence="2 3 4">
    <location>
        <begin position="950"/>
        <end position="981"/>
    </location>
</feature>
<feature type="sequence conflict" description="In Ref. 2; BAE32595." evidence="5" ref="2">
    <original>F</original>
    <variation>L</variation>
    <location>
        <position position="116"/>
    </location>
</feature>
<feature type="sequence conflict" description="In Ref. 1; AAL03981/AAL03982." evidence="5" ref="1">
    <original>R</original>
    <variation>H</variation>
    <location>
        <position position="168"/>
    </location>
</feature>
<feature type="sequence conflict" description="In Ref. 2; BAE32595." evidence="5" ref="2">
    <original>I</original>
    <variation>V</variation>
    <location>
        <position position="566"/>
    </location>
</feature>
<feature type="sequence conflict" description="In Ref. 1; AAL03981/AAL03982." evidence="5" ref="1">
    <original>C</original>
    <variation>S</variation>
    <location>
        <position position="579"/>
    </location>
</feature>
<feature type="sequence conflict" description="In Ref. 1; AAL03981/AAL03982 and 5; BAC65586." evidence="5" ref="1 5">
    <original>P</original>
    <variation>A</variation>
    <location>
        <position position="938"/>
    </location>
</feature>
<keyword id="KW-0025">Alternative splicing</keyword>
<keyword id="KW-0597">Phosphoprotein</keyword>
<keyword id="KW-1185">Reference proteome</keyword>
<keyword id="KW-0677">Repeat</keyword>
<keyword id="KW-0853">WD repeat</keyword>
<proteinExistence type="evidence at protein level"/>
<name>WDR7_MOUSE</name>
<protein>
    <recommendedName>
        <fullName>WD repeat-containing protein 7</fullName>
    </recommendedName>
    <alternativeName>
        <fullName>TGF-beta resistance-associated protein TRAG</fullName>
    </alternativeName>
</protein>
<sequence length="1489" mass="163450">MAGNSLVLPIVLWGRKAPTHCISSILLTDDGGTIVTGCHDGQICLWDVSVELEVNPRALLFGHTASITCLSKACASGDKRYTVSASANGEMCLWDVNDGRCIEFTKLACTHTGIQFYQFSVGNQQEGRLLCHGHYPEILVVDATSLEVLYSLVSKISPDWISSMSIIRSQRTQEDTVVALSVTGILKVWIVTSEMSGMQDTEPIFEEESKPIYCQNCQSISFCAFTQRSLLVVCSKYWRVFDAGDYSLLCSGPSENGQTWTGGDFVSADKVIIWTENGQSYIYKLPASCLPASDSFRSDVGKAVENLIPPVQHSLLDQKDKELVICPPVTRFFYGCKEYLHKLLIQGDSSGRLNIWNIADIAEKQEADEGLKMTTCISLQEAFDKLKPCPAGIIDQLSVIPNSNEPLKVTASVYIPAHGRLVCGREDGSIIIVPATQTAIVQLLQGEHMLRRGWPPHRTLRGHRNKVTCLLYPHQVSARYDQRYLISGGVDFSVIIWDIFSGEMKHIFCVHGGEITQLLVPPENCSARVQHCICSVASDHSVGLLSLREKKCIMLASRHLFPIQVIKWRPSDDYLVVGCTDGSVYVWQMDTGALDRCAMGITAVEILNACDEAVPAAVDSLSHPAVNLKQAMTRRSLAALKNMAHHKLQTLATNLLASEASDKGNLPKYSHNSLMVQAIKTNLTDPDIHVLFFDVEALIIQLLTEEASRPNTALISPENLQKASGSSDKGGSFLTGKRAAVLFQQVKETIKENIKEHLLDEEEDEEEARRQSREDSDPEYRASKSKPLTLLEYNLTMDTAKLFMSCLHAWGLNEVLDEVCLDRLGMLKPHCTVSFGLLSRGGHMSLMLPGYNQAAGKLLHAKAEVGRKLPAAEGVGKGTYTVSRAVTTQHLLSIISLANTLMSMTNATFIGDHMKKGPTRPPRPGTPDLSKARDSPPPSSNIVQGQIKQAAAPVVSARSDADHSGSDSASPALPTCFLVNEGWSQLAAMHCVMLPDLLGLERFRPPLLEMLARRWQDRCLEVREAAQALLLAELRRIEQAGRKETIDTWAPYLPQYMDHVISPGVTAEAMQTMAAAPDASGPEAKVQEEEHDLVDDDITAGCLSSVPQMKKISTSYEERRKQATAIVLLGVIGAEFGAEIEPPKLLTRPRSSSQIPEGFGLTSGGSNYSLARHTCKALTYLLLQPPSPKLPPHSTIRRTATDLIGRGFTVWEPYMDVSAVLMGLLELCADAEKQLANITMGLPLSPAADSARSARHALSLIATARPPAFITTIAKEVHRHTALAANTQSQQSIHTTTLARAKGEILRVIEILIEKMPTDVVDLLVEVMDIIMYCLEGSLVKKKGLQECFPAICRFYMVSYYERSHRIAVGARHGSVALYDIRTGKCQTIHGHKGPITAVSFAPDGRYLATYSNTDSHISFWQMNTSLLGSIGMLNSAPQLRCIKTYQVPPVQPASPGSHNALKLARLIWTSNRNVILMAHDGKEHRFMV</sequence>
<gene>
    <name type="primary">Wdr7</name>
    <name type="synonym">Kiaa0541</name>
    <name type="synonym">Trag</name>
</gene>
<dbReference type="EMBL" id="AF188123">
    <property type="protein sequence ID" value="AAL03981.1"/>
    <property type="molecule type" value="mRNA"/>
</dbReference>
<dbReference type="EMBL" id="AF188124">
    <property type="protein sequence ID" value="AAL03982.1"/>
    <property type="molecule type" value="mRNA"/>
</dbReference>
<dbReference type="EMBL" id="AK154451">
    <property type="protein sequence ID" value="BAE32595.1"/>
    <property type="molecule type" value="mRNA"/>
</dbReference>
<dbReference type="EMBL" id="CH466528">
    <property type="protein sequence ID" value="EDL09715.1"/>
    <property type="molecule type" value="Genomic_DNA"/>
</dbReference>
<dbReference type="EMBL" id="BC125573">
    <property type="protein sequence ID" value="AAI25574.1"/>
    <property type="molecule type" value="mRNA"/>
</dbReference>
<dbReference type="EMBL" id="BC137785">
    <property type="protein sequence ID" value="AAI37786.1"/>
    <property type="molecule type" value="mRNA"/>
</dbReference>
<dbReference type="EMBL" id="AK122304">
    <property type="protein sequence ID" value="BAC65586.1"/>
    <property type="molecule type" value="mRNA"/>
</dbReference>
<dbReference type="CCDS" id="CCDS50307.1">
    <molecule id="Q920I9-1"/>
</dbReference>
<dbReference type="CCDS" id="CCDS89260.1">
    <molecule id="Q920I9-2"/>
</dbReference>
<dbReference type="RefSeq" id="NP_001014981.1">
    <molecule id="Q920I9-1"/>
    <property type="nucleotide sequence ID" value="NM_001014981.1"/>
</dbReference>
<dbReference type="RefSeq" id="NP_001347766.1">
    <molecule id="Q920I9-2"/>
    <property type="nucleotide sequence ID" value="NM_001360837.1"/>
</dbReference>
<dbReference type="RefSeq" id="XP_006525540.1">
    <property type="nucleotide sequence ID" value="XM_006525477.3"/>
</dbReference>
<dbReference type="BioGRID" id="222341">
    <property type="interactions" value="15"/>
</dbReference>
<dbReference type="FunCoup" id="Q920I9">
    <property type="interactions" value="2944"/>
</dbReference>
<dbReference type="IntAct" id="Q920I9">
    <property type="interactions" value="4"/>
</dbReference>
<dbReference type="MINT" id="Q920I9"/>
<dbReference type="STRING" id="10090.ENSMUSP00000072509"/>
<dbReference type="GlyGen" id="Q920I9">
    <property type="glycosylation" value="2 sites, 1 N-linked glycan (1 site), 1 O-linked glycan (1 site)"/>
</dbReference>
<dbReference type="iPTMnet" id="Q920I9"/>
<dbReference type="PhosphoSitePlus" id="Q920I9"/>
<dbReference type="SwissPalm" id="Q920I9"/>
<dbReference type="jPOST" id="Q920I9"/>
<dbReference type="PaxDb" id="10090-ENSMUSP00000072509"/>
<dbReference type="PeptideAtlas" id="Q920I9"/>
<dbReference type="ProteomicsDB" id="297552">
    <molecule id="Q920I9-1"/>
</dbReference>
<dbReference type="ProteomicsDB" id="297553">
    <molecule id="Q920I9-2"/>
</dbReference>
<dbReference type="Pumba" id="Q920I9"/>
<dbReference type="Antibodypedia" id="62690">
    <property type="antibodies" value="21 antibodies from 11 providers"/>
</dbReference>
<dbReference type="DNASU" id="104082"/>
<dbReference type="Ensembl" id="ENSMUST00000072726.7">
    <molecule id="Q920I9-1"/>
    <property type="protein sequence ID" value="ENSMUSP00000072509.6"/>
    <property type="gene ID" value="ENSMUSG00000040560.11"/>
</dbReference>
<dbReference type="Ensembl" id="ENSMUST00000236879.2">
    <molecule id="Q920I9-2"/>
    <property type="protein sequence ID" value="ENSMUSP00000158252.2"/>
    <property type="gene ID" value="ENSMUSG00000040560.11"/>
</dbReference>
<dbReference type="GeneID" id="104082"/>
<dbReference type="KEGG" id="mmu:104082"/>
<dbReference type="UCSC" id="uc008fea.2">
    <molecule id="Q920I9-1"/>
    <property type="organism name" value="mouse"/>
</dbReference>
<dbReference type="UCSC" id="uc008feb.2">
    <molecule id="Q920I9-2"/>
    <property type="organism name" value="mouse"/>
</dbReference>
<dbReference type="AGR" id="MGI:1860197"/>
<dbReference type="CTD" id="23335"/>
<dbReference type="MGI" id="MGI:1860197">
    <property type="gene designation" value="Wdr7"/>
</dbReference>
<dbReference type="VEuPathDB" id="HostDB:ENSMUSG00000040560"/>
<dbReference type="eggNOG" id="KOG4155">
    <property type="taxonomic scope" value="Eukaryota"/>
</dbReference>
<dbReference type="GeneTree" id="ENSGT00940000155301"/>
<dbReference type="HOGENOM" id="CLU_004362_1_0_1"/>
<dbReference type="InParanoid" id="Q920I9"/>
<dbReference type="OMA" id="KQMPPRI"/>
<dbReference type="OrthoDB" id="338622at2759"/>
<dbReference type="PhylomeDB" id="Q920I9"/>
<dbReference type="TreeFam" id="TF313196"/>
<dbReference type="BioGRID-ORCS" id="104082">
    <property type="hits" value="24 hits in 77 CRISPR screens"/>
</dbReference>
<dbReference type="CD-CODE" id="CE726F99">
    <property type="entry name" value="Postsynaptic density"/>
</dbReference>
<dbReference type="ChiTaRS" id="Wdr7">
    <property type="organism name" value="mouse"/>
</dbReference>
<dbReference type="PRO" id="PR:Q920I9"/>
<dbReference type="Proteomes" id="UP000000589">
    <property type="component" value="Chromosome 18"/>
</dbReference>
<dbReference type="RNAct" id="Q920I9">
    <property type="molecule type" value="protein"/>
</dbReference>
<dbReference type="Bgee" id="ENSMUSG00000040560">
    <property type="expression patterns" value="Expressed in superior cervical ganglion and 224 other cell types or tissues"/>
</dbReference>
<dbReference type="ExpressionAtlas" id="Q920I9">
    <property type="expression patterns" value="baseline and differential"/>
</dbReference>
<dbReference type="GO" id="GO:0008021">
    <property type="term" value="C:synaptic vesicle"/>
    <property type="evidence" value="ECO:0007669"/>
    <property type="project" value="Ensembl"/>
</dbReference>
<dbReference type="GO" id="GO:0002244">
    <property type="term" value="P:hematopoietic progenitor cell differentiation"/>
    <property type="evidence" value="ECO:0000315"/>
    <property type="project" value="MGI"/>
</dbReference>
<dbReference type="FunFam" id="2.130.10.10:FF:000432">
    <property type="entry name" value="WD repeat domain 7"/>
    <property type="match status" value="1"/>
</dbReference>
<dbReference type="FunFam" id="2.130.10.10:FF:000247">
    <property type="entry name" value="WD repeat-containing protein 72"/>
    <property type="match status" value="1"/>
</dbReference>
<dbReference type="Gene3D" id="2.130.10.10">
    <property type="entry name" value="YVTN repeat-like/Quinoprotein amine dehydrogenase"/>
    <property type="match status" value="3"/>
</dbReference>
<dbReference type="InterPro" id="IPR011047">
    <property type="entry name" value="Quinoprotein_ADH-like_sf"/>
</dbReference>
<dbReference type="InterPro" id="IPR015943">
    <property type="entry name" value="WD40/YVTN_repeat-like_dom_sf"/>
</dbReference>
<dbReference type="InterPro" id="IPR019775">
    <property type="entry name" value="WD40_repeat_CS"/>
</dbReference>
<dbReference type="InterPro" id="IPR036322">
    <property type="entry name" value="WD40_repeat_dom_sf"/>
</dbReference>
<dbReference type="InterPro" id="IPR001680">
    <property type="entry name" value="WD40_rpt"/>
</dbReference>
<dbReference type="InterPro" id="IPR049916">
    <property type="entry name" value="WDR7/72"/>
</dbReference>
<dbReference type="PANTHER" id="PTHR44099">
    <property type="entry name" value="RABCONNECTIN-3B, ISOFORM A"/>
    <property type="match status" value="1"/>
</dbReference>
<dbReference type="PANTHER" id="PTHR44099:SF3">
    <property type="entry name" value="WD REPEAT-CONTAINING PROTEIN 7"/>
    <property type="match status" value="1"/>
</dbReference>
<dbReference type="Pfam" id="PF00400">
    <property type="entry name" value="WD40"/>
    <property type="match status" value="5"/>
</dbReference>
<dbReference type="Pfam" id="PF23123">
    <property type="entry name" value="WDR72_alpha-sol"/>
    <property type="match status" value="1"/>
</dbReference>
<dbReference type="SMART" id="SM00320">
    <property type="entry name" value="WD40"/>
    <property type="match status" value="7"/>
</dbReference>
<dbReference type="SUPFAM" id="SSF50998">
    <property type="entry name" value="Quinoprotein alcohol dehydrogenase-like"/>
    <property type="match status" value="1"/>
</dbReference>
<dbReference type="SUPFAM" id="SSF50978">
    <property type="entry name" value="WD40 repeat-like"/>
    <property type="match status" value="1"/>
</dbReference>
<dbReference type="PROSITE" id="PS00678">
    <property type="entry name" value="WD_REPEATS_1"/>
    <property type="match status" value="3"/>
</dbReference>
<dbReference type="PROSITE" id="PS50082">
    <property type="entry name" value="WD_REPEATS_2"/>
    <property type="match status" value="4"/>
</dbReference>
<dbReference type="PROSITE" id="PS50294">
    <property type="entry name" value="WD_REPEATS_REGION"/>
    <property type="match status" value="3"/>
</dbReference>
<reference key="1">
    <citation type="submission" date="1999-09" db="EMBL/GenBank/DDBJ databases">
        <title>TRAG: a novel gene associated with TGF-beta resistance.</title>
        <authorList>
            <person name="Sanders S."/>
            <person name="Thorgeirsson S.S."/>
        </authorList>
    </citation>
    <scope>NUCLEOTIDE SEQUENCE [MRNA] (ISOFORMS 1 AND 2)</scope>
    <source>
        <strain>129/SvJ</strain>
        <tissue>Brain</tissue>
    </source>
</reference>
<reference key="2">
    <citation type="journal article" date="2005" name="Science">
        <title>The transcriptional landscape of the mammalian genome.</title>
        <authorList>
            <person name="Carninci P."/>
            <person name="Kasukawa T."/>
            <person name="Katayama S."/>
            <person name="Gough J."/>
            <person name="Frith M.C."/>
            <person name="Maeda N."/>
            <person name="Oyama R."/>
            <person name="Ravasi T."/>
            <person name="Lenhard B."/>
            <person name="Wells C."/>
            <person name="Kodzius R."/>
            <person name="Shimokawa K."/>
            <person name="Bajic V.B."/>
            <person name="Brenner S.E."/>
            <person name="Batalov S."/>
            <person name="Forrest A.R."/>
            <person name="Zavolan M."/>
            <person name="Davis M.J."/>
            <person name="Wilming L.G."/>
            <person name="Aidinis V."/>
            <person name="Allen J.E."/>
            <person name="Ambesi-Impiombato A."/>
            <person name="Apweiler R."/>
            <person name="Aturaliya R.N."/>
            <person name="Bailey T.L."/>
            <person name="Bansal M."/>
            <person name="Baxter L."/>
            <person name="Beisel K.W."/>
            <person name="Bersano T."/>
            <person name="Bono H."/>
            <person name="Chalk A.M."/>
            <person name="Chiu K.P."/>
            <person name="Choudhary V."/>
            <person name="Christoffels A."/>
            <person name="Clutterbuck D.R."/>
            <person name="Crowe M.L."/>
            <person name="Dalla E."/>
            <person name="Dalrymple B.P."/>
            <person name="de Bono B."/>
            <person name="Della Gatta G."/>
            <person name="di Bernardo D."/>
            <person name="Down T."/>
            <person name="Engstrom P."/>
            <person name="Fagiolini M."/>
            <person name="Faulkner G."/>
            <person name="Fletcher C.F."/>
            <person name="Fukushima T."/>
            <person name="Furuno M."/>
            <person name="Futaki S."/>
            <person name="Gariboldi M."/>
            <person name="Georgii-Hemming P."/>
            <person name="Gingeras T.R."/>
            <person name="Gojobori T."/>
            <person name="Green R.E."/>
            <person name="Gustincich S."/>
            <person name="Harbers M."/>
            <person name="Hayashi Y."/>
            <person name="Hensch T.K."/>
            <person name="Hirokawa N."/>
            <person name="Hill D."/>
            <person name="Huminiecki L."/>
            <person name="Iacono M."/>
            <person name="Ikeo K."/>
            <person name="Iwama A."/>
            <person name="Ishikawa T."/>
            <person name="Jakt M."/>
            <person name="Kanapin A."/>
            <person name="Katoh M."/>
            <person name="Kawasawa Y."/>
            <person name="Kelso J."/>
            <person name="Kitamura H."/>
            <person name="Kitano H."/>
            <person name="Kollias G."/>
            <person name="Krishnan S.P."/>
            <person name="Kruger A."/>
            <person name="Kummerfeld S.K."/>
            <person name="Kurochkin I.V."/>
            <person name="Lareau L.F."/>
            <person name="Lazarevic D."/>
            <person name="Lipovich L."/>
            <person name="Liu J."/>
            <person name="Liuni S."/>
            <person name="McWilliam S."/>
            <person name="Madan Babu M."/>
            <person name="Madera M."/>
            <person name="Marchionni L."/>
            <person name="Matsuda H."/>
            <person name="Matsuzawa S."/>
            <person name="Miki H."/>
            <person name="Mignone F."/>
            <person name="Miyake S."/>
            <person name="Morris K."/>
            <person name="Mottagui-Tabar S."/>
            <person name="Mulder N."/>
            <person name="Nakano N."/>
            <person name="Nakauchi H."/>
            <person name="Ng P."/>
            <person name="Nilsson R."/>
            <person name="Nishiguchi S."/>
            <person name="Nishikawa S."/>
            <person name="Nori F."/>
            <person name="Ohara O."/>
            <person name="Okazaki Y."/>
            <person name="Orlando V."/>
            <person name="Pang K.C."/>
            <person name="Pavan W.J."/>
            <person name="Pavesi G."/>
            <person name="Pesole G."/>
            <person name="Petrovsky N."/>
            <person name="Piazza S."/>
            <person name="Reed J."/>
            <person name="Reid J.F."/>
            <person name="Ring B.Z."/>
            <person name="Ringwald M."/>
            <person name="Rost B."/>
            <person name="Ruan Y."/>
            <person name="Salzberg S.L."/>
            <person name="Sandelin A."/>
            <person name="Schneider C."/>
            <person name="Schoenbach C."/>
            <person name="Sekiguchi K."/>
            <person name="Semple C.A."/>
            <person name="Seno S."/>
            <person name="Sessa L."/>
            <person name="Sheng Y."/>
            <person name="Shibata Y."/>
            <person name="Shimada H."/>
            <person name="Shimada K."/>
            <person name="Silva D."/>
            <person name="Sinclair B."/>
            <person name="Sperling S."/>
            <person name="Stupka E."/>
            <person name="Sugiura K."/>
            <person name="Sultana R."/>
            <person name="Takenaka Y."/>
            <person name="Taki K."/>
            <person name="Tammoja K."/>
            <person name="Tan S.L."/>
            <person name="Tang S."/>
            <person name="Taylor M.S."/>
            <person name="Tegner J."/>
            <person name="Teichmann S.A."/>
            <person name="Ueda H.R."/>
            <person name="van Nimwegen E."/>
            <person name="Verardo R."/>
            <person name="Wei C.L."/>
            <person name="Yagi K."/>
            <person name="Yamanishi H."/>
            <person name="Zabarovsky E."/>
            <person name="Zhu S."/>
            <person name="Zimmer A."/>
            <person name="Hide W."/>
            <person name="Bult C."/>
            <person name="Grimmond S.M."/>
            <person name="Teasdale R.D."/>
            <person name="Liu E.T."/>
            <person name="Brusic V."/>
            <person name="Quackenbush J."/>
            <person name="Wahlestedt C."/>
            <person name="Mattick J.S."/>
            <person name="Hume D.A."/>
            <person name="Kai C."/>
            <person name="Sasaki D."/>
            <person name="Tomaru Y."/>
            <person name="Fukuda S."/>
            <person name="Kanamori-Katayama M."/>
            <person name="Suzuki M."/>
            <person name="Aoki J."/>
            <person name="Arakawa T."/>
            <person name="Iida J."/>
            <person name="Imamura K."/>
            <person name="Itoh M."/>
            <person name="Kato T."/>
            <person name="Kawaji H."/>
            <person name="Kawagashira N."/>
            <person name="Kawashima T."/>
            <person name="Kojima M."/>
            <person name="Kondo S."/>
            <person name="Konno H."/>
            <person name="Nakano K."/>
            <person name="Ninomiya N."/>
            <person name="Nishio T."/>
            <person name="Okada M."/>
            <person name="Plessy C."/>
            <person name="Shibata K."/>
            <person name="Shiraki T."/>
            <person name="Suzuki S."/>
            <person name="Tagami M."/>
            <person name="Waki K."/>
            <person name="Watahiki A."/>
            <person name="Okamura-Oho Y."/>
            <person name="Suzuki H."/>
            <person name="Kawai J."/>
            <person name="Hayashizaki Y."/>
        </authorList>
    </citation>
    <scope>NUCLEOTIDE SEQUENCE [LARGE SCALE MRNA] (ISOFORM 2)</scope>
    <source>
        <strain>NOD</strain>
    </source>
</reference>
<reference key="3">
    <citation type="submission" date="2005-09" db="EMBL/GenBank/DDBJ databases">
        <authorList>
            <person name="Mural R.J."/>
            <person name="Adams M.D."/>
            <person name="Myers E.W."/>
            <person name="Smith H.O."/>
            <person name="Venter J.C."/>
        </authorList>
    </citation>
    <scope>NUCLEOTIDE SEQUENCE [LARGE SCALE GENOMIC DNA]</scope>
</reference>
<reference key="4">
    <citation type="journal article" date="2004" name="Genome Res.">
        <title>The status, quality, and expansion of the NIH full-length cDNA project: the Mammalian Gene Collection (MGC).</title>
        <authorList>
            <consortium name="The MGC Project Team"/>
        </authorList>
    </citation>
    <scope>NUCLEOTIDE SEQUENCE [LARGE SCALE MRNA]</scope>
    <source>
        <tissue>Brain</tissue>
    </source>
</reference>
<reference key="5">
    <citation type="journal article" date="2003" name="DNA Res.">
        <title>Prediction of the coding sequences of mouse homologues of KIAA gene: II. The complete nucleotide sequences of 400 mouse KIAA-homologous cDNAs identified by screening of terminal sequences of cDNA clones randomly sampled from size-fractionated libraries.</title>
        <authorList>
            <person name="Okazaki N."/>
            <person name="Kikuno R."/>
            <person name="Ohara R."/>
            <person name="Inamoto S."/>
            <person name="Aizawa H."/>
            <person name="Yuasa S."/>
            <person name="Nakajima D."/>
            <person name="Nagase T."/>
            <person name="Ohara O."/>
            <person name="Koga H."/>
        </authorList>
    </citation>
    <scope>NUCLEOTIDE SEQUENCE [LARGE SCALE MRNA] OF 292-1489 (ISOFORM 2)</scope>
    <source>
        <tissue>Brain</tissue>
    </source>
</reference>
<reference key="6">
    <citation type="journal article" date="2007" name="Proc. Natl. Acad. Sci. U.S.A.">
        <title>Large-scale phosphorylation analysis of mouse liver.</title>
        <authorList>
            <person name="Villen J."/>
            <person name="Beausoleil S.A."/>
            <person name="Gerber S.A."/>
            <person name="Gygi S.P."/>
        </authorList>
    </citation>
    <scope>IDENTIFICATION BY MASS SPECTROMETRY [LARGE SCALE ANALYSIS]</scope>
    <source>
        <tissue>Liver</tissue>
    </source>
</reference>
<reference key="7">
    <citation type="journal article" date="2010" name="Cell">
        <title>A tissue-specific atlas of mouse protein phosphorylation and expression.</title>
        <authorList>
            <person name="Huttlin E.L."/>
            <person name="Jedrychowski M.P."/>
            <person name="Elias J.E."/>
            <person name="Goswami T."/>
            <person name="Rad R."/>
            <person name="Beausoleil S.A."/>
            <person name="Villen J."/>
            <person name="Haas W."/>
            <person name="Sowa M.E."/>
            <person name="Gygi S.P."/>
        </authorList>
    </citation>
    <scope>PHOSPHORYLATION [LARGE SCALE ANALYSIS] AT SER-935 AND SER-1455</scope>
    <scope>IDENTIFICATION BY MASS SPECTROMETRY [LARGE SCALE ANALYSIS]</scope>
    <source>
        <tissue>Brain</tissue>
        <tissue>Brown adipose tissue</tissue>
        <tissue>Heart</tissue>
        <tissue>Kidney</tissue>
        <tissue>Liver</tissue>
        <tissue>Lung</tissue>
        <tissue>Pancreas</tissue>
        <tissue>Spleen</tissue>
        <tissue>Testis</tissue>
    </source>
</reference>
<accession>Q920I9</accession>
<accession>Q059Q1</accession>
<accession>Q3U440</accession>
<accession>Q80TY3</accession>
<accession>Q920J0</accession>